<sequence>MLRRGFIKQPPFVKIFKIVSPESTNAKATHCEVEFPLKVQELWRDKHHVIFNKPPLALSQLPDKRTWYNTHDYDPPVLLDIVQSSSGSILKDGTYEPSYYPIHRIDTPVSGGIVYAVNKQSAQQFSRNLRYGGNKGFSLTRKYVAKVGKSKTANECKEGLIKWNGAITYFQRVDNEHLILQLVTGKKHQIRKLTQQVLDSPIYNDLKYGGKKVFDSDFQIALHSAYIRTKIGFNIHEQIIPVPDGFRMIWGESVDQNGNFNEDITRVLKEDWAGTIKECLKKLKIQETKLADNQLIFVS</sequence>
<reference key="1">
    <citation type="journal article" date="2004" name="Nature">
        <title>Genome evolution in yeasts.</title>
        <authorList>
            <person name="Dujon B."/>
            <person name="Sherman D."/>
            <person name="Fischer G."/>
            <person name="Durrens P."/>
            <person name="Casaregola S."/>
            <person name="Lafontaine I."/>
            <person name="de Montigny J."/>
            <person name="Marck C."/>
            <person name="Neuveglise C."/>
            <person name="Talla E."/>
            <person name="Goffard N."/>
            <person name="Frangeul L."/>
            <person name="Aigle M."/>
            <person name="Anthouard V."/>
            <person name="Babour A."/>
            <person name="Barbe V."/>
            <person name="Barnay S."/>
            <person name="Blanchin S."/>
            <person name="Beckerich J.-M."/>
            <person name="Beyne E."/>
            <person name="Bleykasten C."/>
            <person name="Boisrame A."/>
            <person name="Boyer J."/>
            <person name="Cattolico L."/>
            <person name="Confanioleri F."/>
            <person name="de Daruvar A."/>
            <person name="Despons L."/>
            <person name="Fabre E."/>
            <person name="Fairhead C."/>
            <person name="Ferry-Dumazet H."/>
            <person name="Groppi A."/>
            <person name="Hantraye F."/>
            <person name="Hennequin C."/>
            <person name="Jauniaux N."/>
            <person name="Joyet P."/>
            <person name="Kachouri R."/>
            <person name="Kerrest A."/>
            <person name="Koszul R."/>
            <person name="Lemaire M."/>
            <person name="Lesur I."/>
            <person name="Ma L."/>
            <person name="Muller H."/>
            <person name="Nicaud J.-M."/>
            <person name="Nikolski M."/>
            <person name="Oztas S."/>
            <person name="Ozier-Kalogeropoulos O."/>
            <person name="Pellenz S."/>
            <person name="Potier S."/>
            <person name="Richard G.-F."/>
            <person name="Straub M.-L."/>
            <person name="Suleau A."/>
            <person name="Swennen D."/>
            <person name="Tekaia F."/>
            <person name="Wesolowski-Louvel M."/>
            <person name="Westhof E."/>
            <person name="Wirth B."/>
            <person name="Zeniou-Meyer M."/>
            <person name="Zivanovic Y."/>
            <person name="Bolotin-Fukuhara M."/>
            <person name="Thierry A."/>
            <person name="Bouchier C."/>
            <person name="Caudron B."/>
            <person name="Scarpelli C."/>
            <person name="Gaillardin C."/>
            <person name="Weissenbach J."/>
            <person name="Wincker P."/>
            <person name="Souciet J.-L."/>
        </authorList>
    </citation>
    <scope>NUCLEOTIDE SEQUENCE [LARGE SCALE GENOMIC DNA]</scope>
    <source>
        <strain>ATCC 8585 / CBS 2359 / DSM 70799 / NBRC 1267 / NRRL Y-1140 / WM37</strain>
    </source>
</reference>
<dbReference type="EC" id="5.4.99.43" evidence="2"/>
<dbReference type="EMBL" id="CR382124">
    <property type="protein sequence ID" value="CAH00961.1"/>
    <property type="molecule type" value="Genomic_DNA"/>
</dbReference>
<dbReference type="RefSeq" id="XP_453865.1">
    <property type="nucleotide sequence ID" value="XM_453865.1"/>
</dbReference>
<dbReference type="SMR" id="Q6CQC4"/>
<dbReference type="FunCoup" id="Q6CQC4">
    <property type="interactions" value="105"/>
</dbReference>
<dbReference type="STRING" id="284590.Q6CQC4"/>
<dbReference type="PaxDb" id="284590-Q6CQC4"/>
<dbReference type="KEGG" id="kla:KLLA0_D18172g"/>
<dbReference type="eggNOG" id="KOG1919">
    <property type="taxonomic scope" value="Eukaryota"/>
</dbReference>
<dbReference type="HOGENOM" id="CLU_081037_0_0_1"/>
<dbReference type="InParanoid" id="Q6CQC4"/>
<dbReference type="OMA" id="CIITKIG"/>
<dbReference type="Proteomes" id="UP000000598">
    <property type="component" value="Chromosome D"/>
</dbReference>
<dbReference type="GO" id="GO:0005739">
    <property type="term" value="C:mitochondrion"/>
    <property type="evidence" value="ECO:0007669"/>
    <property type="project" value="UniProtKB-SubCell"/>
</dbReference>
<dbReference type="GO" id="GO:0160143">
    <property type="term" value="F:21S rRNA pseudouridine(2819) synthase activity"/>
    <property type="evidence" value="ECO:0007669"/>
    <property type="project" value="UniProtKB-EC"/>
</dbReference>
<dbReference type="GO" id="GO:0003723">
    <property type="term" value="F:RNA binding"/>
    <property type="evidence" value="ECO:0007669"/>
    <property type="project" value="InterPro"/>
</dbReference>
<dbReference type="GO" id="GO:0000455">
    <property type="term" value="P:enzyme-directed rRNA pseudouridine synthesis"/>
    <property type="evidence" value="ECO:0007669"/>
    <property type="project" value="TreeGrafter"/>
</dbReference>
<dbReference type="CDD" id="cd02869">
    <property type="entry name" value="PseudoU_synth_RluA_like"/>
    <property type="match status" value="1"/>
</dbReference>
<dbReference type="Gene3D" id="3.30.2350.10">
    <property type="entry name" value="Pseudouridine synthase"/>
    <property type="match status" value="1"/>
</dbReference>
<dbReference type="InterPro" id="IPR020103">
    <property type="entry name" value="PsdUridine_synth_cat_dom_sf"/>
</dbReference>
<dbReference type="InterPro" id="IPR006145">
    <property type="entry name" value="PsdUridine_synth_RsuA/RluA"/>
</dbReference>
<dbReference type="InterPro" id="IPR050188">
    <property type="entry name" value="RluA_PseudoU_synthase"/>
</dbReference>
<dbReference type="PANTHER" id="PTHR21600:SF81">
    <property type="entry name" value="21S RRNA PSEUDOURIDINE(2819) SYNTHASE"/>
    <property type="match status" value="1"/>
</dbReference>
<dbReference type="PANTHER" id="PTHR21600">
    <property type="entry name" value="MITOCHONDRIAL RNA PSEUDOURIDINE SYNTHASE"/>
    <property type="match status" value="1"/>
</dbReference>
<dbReference type="Pfam" id="PF00849">
    <property type="entry name" value="PseudoU_synth_2"/>
    <property type="match status" value="1"/>
</dbReference>
<dbReference type="SUPFAM" id="SSF55120">
    <property type="entry name" value="Pseudouridine synthase"/>
    <property type="match status" value="1"/>
</dbReference>
<protein>
    <recommendedName>
        <fullName>21S rRNA pseudouridine(2819) synthase</fullName>
        <ecNumber evidence="2">5.4.99.43</ecNumber>
    </recommendedName>
    <alternativeName>
        <fullName>Pseudouridine synthase 5</fullName>
    </alternativeName>
    <alternativeName>
        <fullName>Pseudouridylate synthase PUS5</fullName>
    </alternativeName>
    <alternativeName>
        <fullName>Uracil hydrolyase PUS5</fullName>
    </alternativeName>
</protein>
<name>PUS5_KLULA</name>
<keyword id="KW-0413">Isomerase</keyword>
<keyword id="KW-0496">Mitochondrion</keyword>
<keyword id="KW-1185">Reference proteome</keyword>
<keyword id="KW-0698">rRNA processing</keyword>
<comment type="function">
    <text evidence="2">Pseudouridylate synthase responsible for the pseudouridine-2819 formation in mitochondrial 21S rRNA. May modulate the efficiency or the fidelity of the mitochondrial translation machinery.</text>
</comment>
<comment type="catalytic activity">
    <reaction evidence="2">
        <text>uridine(2819) in 21S rRNA = pseudouridine(2819) in 21S rRNA</text>
        <dbReference type="Rhea" id="RHEA:42556"/>
        <dbReference type="Rhea" id="RHEA-COMP:10113"/>
        <dbReference type="Rhea" id="RHEA-COMP:10114"/>
        <dbReference type="ChEBI" id="CHEBI:65314"/>
        <dbReference type="ChEBI" id="CHEBI:65315"/>
        <dbReference type="EC" id="5.4.99.43"/>
    </reaction>
</comment>
<comment type="subcellular location">
    <subcellularLocation>
        <location evidence="2">Mitochondrion</location>
    </subcellularLocation>
</comment>
<comment type="similarity">
    <text evidence="3">Belongs to the pseudouridine synthase RluA family.</text>
</comment>
<gene>
    <name type="primary">PUS5</name>
    <name type="ordered locus">KLLA0D18172g</name>
</gene>
<organism>
    <name type="scientific">Kluyveromyces lactis (strain ATCC 8585 / CBS 2359 / DSM 70799 / NBRC 1267 / NRRL Y-1140 / WM37)</name>
    <name type="common">Yeast</name>
    <name type="synonym">Candida sphaerica</name>
    <dbReference type="NCBI Taxonomy" id="284590"/>
    <lineage>
        <taxon>Eukaryota</taxon>
        <taxon>Fungi</taxon>
        <taxon>Dikarya</taxon>
        <taxon>Ascomycota</taxon>
        <taxon>Saccharomycotina</taxon>
        <taxon>Saccharomycetes</taxon>
        <taxon>Saccharomycetales</taxon>
        <taxon>Saccharomycetaceae</taxon>
        <taxon>Kluyveromyces</taxon>
    </lineage>
</organism>
<feature type="chain" id="PRO_0000162753" description="21S rRNA pseudouridine(2819) synthase">
    <location>
        <begin position="1"/>
        <end position="299"/>
    </location>
</feature>
<feature type="active site" evidence="1">
    <location>
        <position position="106"/>
    </location>
</feature>
<proteinExistence type="inferred from homology"/>
<accession>Q6CQC4</accession>
<evidence type="ECO:0000250" key="1">
    <source>
        <dbReference type="UniProtKB" id="P0AA37"/>
    </source>
</evidence>
<evidence type="ECO:0000250" key="2">
    <source>
        <dbReference type="UniProtKB" id="Q06244"/>
    </source>
</evidence>
<evidence type="ECO:0000305" key="3"/>